<evidence type="ECO:0000250" key="1">
    <source>
        <dbReference type="UniProtKB" id="P29323"/>
    </source>
</evidence>
<evidence type="ECO:0000255" key="2"/>
<evidence type="ECO:0000255" key="3">
    <source>
        <dbReference type="PROSITE-ProRule" id="PRU00159"/>
    </source>
</evidence>
<evidence type="ECO:0000255" key="4">
    <source>
        <dbReference type="PROSITE-ProRule" id="PRU00184"/>
    </source>
</evidence>
<evidence type="ECO:0000255" key="5">
    <source>
        <dbReference type="PROSITE-ProRule" id="PRU00316"/>
    </source>
</evidence>
<evidence type="ECO:0000255" key="6">
    <source>
        <dbReference type="PROSITE-ProRule" id="PRU00883"/>
    </source>
</evidence>
<evidence type="ECO:0000255" key="7">
    <source>
        <dbReference type="PROSITE-ProRule" id="PRU10028"/>
    </source>
</evidence>
<evidence type="ECO:0000269" key="8">
    <source>
    </source>
</evidence>
<evidence type="ECO:0000269" key="9">
    <source>
    </source>
</evidence>
<evidence type="ECO:0000269" key="10">
    <source>
    </source>
</evidence>
<evidence type="ECO:0000269" key="11">
    <source>
    </source>
</evidence>
<evidence type="ECO:0000269" key="12">
    <source>
    </source>
</evidence>
<evidence type="ECO:0000269" key="13">
    <source>
    </source>
</evidence>
<evidence type="ECO:0000269" key="14">
    <source>
    </source>
</evidence>
<evidence type="ECO:0000269" key="15">
    <source>
    </source>
</evidence>
<evidence type="ECO:0000269" key="16">
    <source>
    </source>
</evidence>
<evidence type="ECO:0000269" key="17">
    <source>
    </source>
</evidence>
<evidence type="ECO:0000269" key="18">
    <source>
    </source>
</evidence>
<evidence type="ECO:0000269" key="19">
    <source>
    </source>
</evidence>
<evidence type="ECO:0000269" key="20">
    <source>
    </source>
</evidence>
<evidence type="ECO:0000269" key="21">
    <source>
    </source>
</evidence>
<evidence type="ECO:0000269" key="22">
    <source>
    </source>
</evidence>
<evidence type="ECO:0000269" key="23">
    <source>
    </source>
</evidence>
<evidence type="ECO:0000269" key="24">
    <source>
    </source>
</evidence>
<evidence type="ECO:0000303" key="25">
    <source>
    </source>
</evidence>
<evidence type="ECO:0000303" key="26">
    <source>
    </source>
</evidence>
<evidence type="ECO:0000303" key="27">
    <source>
    </source>
</evidence>
<evidence type="ECO:0000305" key="28"/>
<evidence type="ECO:0000312" key="29">
    <source>
        <dbReference type="MGI" id="MGI:99611"/>
    </source>
</evidence>
<evidence type="ECO:0007829" key="30">
    <source>
        <dbReference type="PDB" id="1JPA"/>
    </source>
</evidence>
<evidence type="ECO:0007829" key="31">
    <source>
        <dbReference type="PDB" id="1SHW"/>
    </source>
</evidence>
<evidence type="ECO:0007829" key="32">
    <source>
        <dbReference type="PDB" id="2HEN"/>
    </source>
</evidence>
<evidence type="ECO:0007829" key="33">
    <source>
        <dbReference type="PDB" id="3ETP"/>
    </source>
</evidence>
<evidence type="ECO:0007829" key="34">
    <source>
        <dbReference type="PDB" id="7S7K"/>
    </source>
</evidence>
<comment type="function">
    <text evidence="1 10 12 14 18 21 22 24">Receptor tyrosine kinase which binds promiscuously transmembrane ephrin-B family ligands residing on adjacent cells, leading to contact-dependent bidirectional signaling into neighboring cells. The signaling pathway downstream of the receptor is referred to as forward signaling while the signaling pathway downstream of the ephrin ligand is referred to as reverse signaling. Functions in axon guidance during development. Involved in the guidance of commissural axons, that form a major interhemispheric connection between the 2 temporal lobes of the cerebral cortex. Also involved in guidance of contralateral inner ear efferent growth cones at the midline and of retinal ganglion cell axons to the optic disk. In addition to axon guidance, also regulates dendritic spines development and maturation and stimulates the formation of excitatory synapses. Upon activation by EFNB1, abolishes the ARHGEF15-mediated negative regulation on excitatory synapse formation. Controls other aspects of development including angiogenesis, palate development and in inner ear development through regulation of endolymph production. Forward and reverse signaling through the EFNB2/EPHB2 complex regulate movement and adhesion of cells that tubularize the urethra and septate the cloaca. May function as a tumor suppressor. May be involved in the regulation of platelet activation and blood coagulation (By similarity).</text>
</comment>
<comment type="catalytic activity">
    <reaction evidence="7">
        <text>L-tyrosyl-[protein] + ATP = O-phospho-L-tyrosyl-[protein] + ADP + H(+)</text>
        <dbReference type="Rhea" id="RHEA:10596"/>
        <dbReference type="Rhea" id="RHEA-COMP:10136"/>
        <dbReference type="Rhea" id="RHEA-COMP:20101"/>
        <dbReference type="ChEBI" id="CHEBI:15378"/>
        <dbReference type="ChEBI" id="CHEBI:30616"/>
        <dbReference type="ChEBI" id="CHEBI:46858"/>
        <dbReference type="ChEBI" id="CHEBI:61978"/>
        <dbReference type="ChEBI" id="CHEBI:456216"/>
        <dbReference type="EC" id="2.7.10.1"/>
    </reaction>
</comment>
<comment type="subunit">
    <text evidence="1 8 10 11 13 18 20 23">Heterotetramer upon binding of the ligand (PubMed:11780069). The heterotetramer is composed of an ephrin dimer and a receptor dimer (PubMed:11780069). Interacts (via PDZ-binding motif) with GRIP1 and PICK1 (via PDZ domain) (PubMed:9883737). Interacts with ARHGEF15; mediates ARHGEF15 phosphorylation, ubiquitination and degradation by the proteasome (PubMed:21029865). Interacts with AQP1; involved in endolymph production in the inner ear (PubMed:10839360). Interacts with EFNA5 (PubMed:15107857). Interacts with SPSB1 (By similarity). Interacts with SPSB4 (PubMed:28931592). Interacts with SH2D3C (PubMed:10542222).</text>
</comment>
<comment type="interaction">
    <interactant intactId="EBI-537711">
        <id>P54763</id>
    </interactant>
    <interactant intactId="EBI-14022231">
        <id>PRO_0000000118</id>
        <label>App</label>
        <dbReference type="UniProtKB" id="P12023"/>
    </interactant>
    <organismsDiffer>false</organismsDiffer>
    <experiments>4</experiments>
</comment>
<comment type="interaction">
    <interactant intactId="EBI-537711">
        <id>P54763</id>
    </interactant>
    <interactant intactId="EBI-2943608">
        <id>Q5FWH6-2</id>
        <label>Arhgef15</label>
    </interactant>
    <organismsDiffer>false</organismsDiffer>
    <experiments>3</experiments>
</comment>
<comment type="interaction">
    <interactant intactId="EBI-537711">
        <id>P54763</id>
    </interactant>
    <interactant intactId="EBI-1539152">
        <id>Q03137</id>
        <label>Epha4</label>
    </interactant>
    <organismsDiffer>false</organismsDiffer>
    <experiments>3</experiments>
</comment>
<comment type="interaction">
    <interactant intactId="EBI-537711">
        <id>P54763</id>
    </interactant>
    <interactant intactId="EBI-537711">
        <id>P54763</id>
        <label>Ephb2</label>
    </interactant>
    <organismsDiffer>false</organismsDiffer>
    <experiments>2</experiments>
</comment>
<comment type="interaction">
    <interactant intactId="EBI-537711">
        <id>P54763</id>
    </interactant>
    <interactant intactId="EBI-537752">
        <id>Q925T6</id>
        <label>Grip1</label>
    </interactant>
    <organismsDiffer>false</organismsDiffer>
    <experiments>2</experiments>
</comment>
<comment type="interaction">
    <interactant intactId="EBI-537711">
        <id>P54763</id>
    </interactant>
    <interactant intactId="EBI-77070">
        <id>P34152</id>
        <label>Ptk2</label>
    </interactant>
    <organismsDiffer>false</organismsDiffer>
    <experiments>3</experiments>
</comment>
<comment type="interaction">
    <interactant intactId="EBI-537711">
        <id>P54763</id>
    </interactant>
    <interactant intactId="EBI-298680">
        <id>P05480</id>
        <label>Src</label>
    </interactant>
    <organismsDiffer>false</organismsDiffer>
    <experiments>3</experiments>
</comment>
<comment type="interaction">
    <interactant intactId="EBI-537711">
        <id>P54763</id>
    </interactant>
    <interactant intactId="EBI-1050007">
        <id>Q13009</id>
        <label>TIAM1</label>
    </interactant>
    <organismsDiffer>true</organismsDiffer>
    <experiments>3</experiments>
</comment>
<comment type="subcellular location">
    <subcellularLocation>
        <location>Cell membrane</location>
        <topology>Single-pass type I membrane protein</topology>
    </subcellularLocation>
    <subcellularLocation>
        <location>Cell projection</location>
        <location>Axon</location>
    </subcellularLocation>
    <subcellularLocation>
        <location>Cell projection</location>
        <location>Dendrite</location>
    </subcellularLocation>
</comment>
<comment type="alternative products">
    <event type="alternative splicing"/>
    <isoform>
        <id>P54763-3</id>
        <name evidence="28">3</name>
        <sequence type="displayed"/>
    </isoform>
    <isoform>
        <id>P54763-2</id>
        <name evidence="28">2</name>
        <sequence type="described" ref="VSP_057933"/>
    </isoform>
    <isoform>
        <id>P54763-4</id>
        <name evidence="28">4</name>
        <sequence type="described" ref="VSP_057932"/>
    </isoform>
</comment>
<comment type="tissue specificity">
    <text evidence="10 19">Expressed in the epithelial dark cells of the inner ear. Expressed in the region of the proximal tubules of the kidney nephron. Expressed in myogenic progenitor cells (PubMed:27446912).</text>
</comment>
<comment type="developmental stage">
    <text evidence="9 10 19 21 24">Highly expressed in ventral cells of the neural tube and within axons of the peripheral nervous system during development. Expressed in the vestibulo-acoustic system and hindbrain as early as 11.5 dpc. Detected in the spinal cord at 12 dpc. Expressed in cells of the developing outer retina. Also expressed in mesenchyme adjacent to vessels. In myogenic progenitor cells, highly expressed during early development (11.5 dpc) and progressively repressed as developments proceeds (PubMed:27446912).</text>
</comment>
<comment type="PTM">
    <text evidence="15">Autophosphorylated; ligand binding stimulates autophosphorylation on tyrosine residues.</text>
</comment>
<comment type="PTM">
    <text evidence="15">Ligand binding induces cleavage by matrix metalloproteinases (MMPs) such as MMP7/MMP9, producing an EphB2/N-terminal fragment (NTF) and a C-terminal long fragment (EphB2-LF). EphB2-LF is further cleaved by MMPs, producing EphB2/CTF1 which is further cleaved by the PS1/gamma-secretase producing EphB2/CTF2.</text>
</comment>
<comment type="PTM">
    <text evidence="1 15 20">Polyubiquitinated; ligand binding stimulates ubiquitination (PubMed:17428795, PubMed:28931592). Ubiquitinated by RNF186 at Lys-891, mainly through 'Lys-27'-linked polyubiquitin chains (By similarity). Ubiquitinated by CRL2(KLHDC2) E3 ligase complex (By similarity).</text>
</comment>
<comment type="disruption phenotype">
    <text evidence="10 21">Mice are long-lived and fertile. They display strain-specific circling behavior, are hyperactive and exhibit rapid head bobbing and twirled excessively when picked-up by the tail. This is probably due to abnormal vestibular function.</text>
</comment>
<comment type="similarity">
    <text evidence="3">Belongs to the protein kinase superfamily. Tyr protein kinase family. Ephrin receptor subfamily.</text>
</comment>
<comment type="sequence caution" evidence="28">
    <conflict type="erroneous initiation">
        <sequence resource="EMBL-CDS" id="AAA72411"/>
    </conflict>
    <text>Truncated N-terminus.</text>
</comment>
<comment type="sequence caution" evidence="28">
    <conflict type="erroneous initiation">
        <sequence resource="EMBL-CDS" id="AAH62924"/>
    </conflict>
    <text>Extended N-terminus.</text>
</comment>
<name>EPHB2_MOUSE</name>
<accession>P54763</accession>
<accession>A3KG00</accession>
<accession>A3KG01</accession>
<accession>A3KG02</accession>
<accession>A3KG89</accession>
<accession>A3KG90</accession>
<accession>Q62213</accession>
<accession>Q6GTQ7</accession>
<accession>Q6P5F1</accession>
<accession>Q9QVY4</accession>
<keyword id="KW-0002">3D-structure</keyword>
<keyword id="KW-0025">Alternative splicing</keyword>
<keyword id="KW-0067">ATP-binding</keyword>
<keyword id="KW-1003">Cell membrane</keyword>
<keyword id="KW-0966">Cell projection</keyword>
<keyword id="KW-0217">Developmental protein</keyword>
<keyword id="KW-0903">Direct protein sequencing</keyword>
<keyword id="KW-1015">Disulfide bond</keyword>
<keyword id="KW-0325">Glycoprotein</keyword>
<keyword id="KW-1017">Isopeptide bond</keyword>
<keyword id="KW-0418">Kinase</keyword>
<keyword id="KW-0472">Membrane</keyword>
<keyword id="KW-0524">Neurogenesis</keyword>
<keyword id="KW-0547">Nucleotide-binding</keyword>
<keyword id="KW-0597">Phosphoprotein</keyword>
<keyword id="KW-0675">Receptor</keyword>
<keyword id="KW-1185">Reference proteome</keyword>
<keyword id="KW-0677">Repeat</keyword>
<keyword id="KW-0732">Signal</keyword>
<keyword id="KW-0808">Transferase</keyword>
<keyword id="KW-0812">Transmembrane</keyword>
<keyword id="KW-1133">Transmembrane helix</keyword>
<keyword id="KW-0829">Tyrosine-protein kinase</keyword>
<keyword id="KW-0832">Ubl conjugation</keyword>
<reference key="1">
    <citation type="journal article" date="2009" name="PLoS Biol.">
        <title>Lineage-specific biology revealed by a finished genome assembly of the mouse.</title>
        <authorList>
            <person name="Church D.M."/>
            <person name="Goodstadt L."/>
            <person name="Hillier L.W."/>
            <person name="Zody M.C."/>
            <person name="Goldstein S."/>
            <person name="She X."/>
            <person name="Bult C.J."/>
            <person name="Agarwala R."/>
            <person name="Cherry J.L."/>
            <person name="DiCuccio M."/>
            <person name="Hlavina W."/>
            <person name="Kapustin Y."/>
            <person name="Meric P."/>
            <person name="Maglott D."/>
            <person name="Birtle Z."/>
            <person name="Marques A.C."/>
            <person name="Graves T."/>
            <person name="Zhou S."/>
            <person name="Teague B."/>
            <person name="Potamousis K."/>
            <person name="Churas C."/>
            <person name="Place M."/>
            <person name="Herschleb J."/>
            <person name="Runnheim R."/>
            <person name="Forrest D."/>
            <person name="Amos-Landgraf J."/>
            <person name="Schwartz D.C."/>
            <person name="Cheng Z."/>
            <person name="Lindblad-Toh K."/>
            <person name="Eichler E.E."/>
            <person name="Ponting C.P."/>
        </authorList>
    </citation>
    <scope>NUCLEOTIDE SEQUENCE [LARGE SCALE GENOMIC DNA]</scope>
    <source>
        <strain>C57BL/6J</strain>
    </source>
</reference>
<reference key="2">
    <citation type="journal article" date="2004" name="Genome Res.">
        <title>The status, quality, and expansion of the NIH full-length cDNA project: the Mammalian Gene Collection (MGC).</title>
        <authorList>
            <consortium name="The MGC Project Team"/>
        </authorList>
    </citation>
    <scope>NUCLEOTIDE SEQUENCE [LARGE SCALE MRNA] (ISOFORMS 3 AND 4)</scope>
    <source>
        <strain>C57BL/6J</strain>
        <tissue>Brain</tissue>
    </source>
</reference>
<reference key="3">
    <citation type="journal article" date="1994" name="Oncogene">
        <title>Immunolocalization of the Nuk receptor tyrosine kinase suggests roles in segmental patterning of the brain and axonogenesis.</title>
        <authorList>
            <person name="Henkemeyer M."/>
            <person name="Marengere L.E."/>
            <person name="McGlade J."/>
            <person name="Olivier J.P."/>
            <person name="Conlon R.A."/>
            <person name="Holmyard D.P."/>
            <person name="Letwin K."/>
            <person name="Pawson T."/>
        </authorList>
    </citation>
    <scope>NUCLEOTIDE SEQUENCE [MRNA] OF 10-986 (ISOFORM 3)</scope>
</reference>
<reference key="4">
    <citation type="journal article" date="1994" name="Mech. Dev.">
        <title>Several receptor tyrosine kinase genes of the Eph family are segmentally expressed in the developing hindbrain.</title>
        <authorList>
            <person name="Becker N."/>
            <person name="Seitanidou T."/>
            <person name="Murphy P."/>
            <person name="Mattei M.-G."/>
            <person name="Topilko P."/>
            <person name="Nieto A."/>
            <person name="Wilkinson D.G."/>
            <person name="Charnay P."/>
            <person name="Gilardi P."/>
        </authorList>
    </citation>
    <scope>NUCLEOTIDE SEQUENCE [MRNA] OF 508-986 (ISOFORM 2)</scope>
    <source>
        <strain>BALB/cJ</strain>
        <tissue>Brain</tissue>
    </source>
</reference>
<reference key="5">
    <citation type="journal article" date="1996" name="Cell">
        <title>Nuk controls pathfinding of commissural axons in the mammalian central nervous system.</title>
        <authorList>
            <person name="Henkemeyer M."/>
            <person name="Orioli D."/>
            <person name="Henderson J.T."/>
            <person name="Saxton T.M."/>
            <person name="Roder J."/>
            <person name="Pawson T."/>
            <person name="Klein R."/>
        </authorList>
    </citation>
    <scope>DISRUPTION PHENOTYPE</scope>
    <scope>FUNCTION IN COMMISSURAL AXON GUIDANCE</scope>
    <scope>SUBCELLULAR LOCATION</scope>
    <scope>DEVELOPMENTAL STAGE</scope>
</reference>
<reference key="6">
    <citation type="journal article" date="1996" name="EMBO J.">
        <title>Sek4 and Nuk receptors cooperate in guidance of commissural axons and in palate formation.</title>
        <authorList>
            <person name="Orioli D."/>
            <person name="Henkemeyer M."/>
            <person name="Lemke G."/>
            <person name="Klein R."/>
            <person name="Pawson T."/>
        </authorList>
    </citation>
    <scope>FUNCTION IN AXON GUIDANCE</scope>
    <scope>FUNCTION IN PALATE DEVELOPMENT</scope>
</reference>
<reference key="7">
    <citation type="journal article" date="1998" name="Neuron">
        <title>PDZ proteins bind, cluster, and synaptically colocalize with Eph receptors and their ephrin ligands.</title>
        <authorList>
            <person name="Torres R."/>
            <person name="Firestein B.L."/>
            <person name="Dong H."/>
            <person name="Staudinger J."/>
            <person name="Olson E.N."/>
            <person name="Huganir R.L."/>
            <person name="Bredt D.S."/>
            <person name="Gale N.W."/>
            <person name="Yancopoulos G.D."/>
        </authorList>
    </citation>
    <scope>INTERACTION WITH PICK1 AND GRIP1</scope>
    <scope>IDENTIFICATION OF PDZ-BINDING MOTIF</scope>
</reference>
<reference key="8">
    <citation type="journal article" date="1999" name="Genes Dev.">
        <title>Roles of ephrinB ligands and EphB receptors in cardiovascular development: demarcation of arterial/venous domains, vascular morphogenesis, and sprouting angiogenesis.</title>
        <authorList>
            <person name="Adams R.H."/>
            <person name="Wilkinson G.A."/>
            <person name="Weiss C."/>
            <person name="Diella F."/>
            <person name="Gale N.W."/>
            <person name="Deutsch U."/>
            <person name="Risau W."/>
            <person name="Klein R."/>
        </authorList>
    </citation>
    <scope>FUNCTION IN ANGIOGENESIS</scope>
    <scope>DEVELOPMENTAL STAGE</scope>
</reference>
<reference key="9">
    <citation type="journal article" date="1999" name="J. Biol. Chem.">
        <title>A novel signaling intermediate, SHEP1, directly couples Eph receptors to R-Ras and Rap1A.</title>
        <authorList>
            <person name="Dodelet V.C."/>
            <person name="Pazzagli C."/>
            <person name="Zisch A.H."/>
            <person name="Hauser C.A."/>
            <person name="Pasquale E.B."/>
        </authorList>
    </citation>
    <scope>INTERACTION WITH SH2D3C</scope>
</reference>
<reference key="10">
    <citation type="journal article" date="2000" name="Development">
        <title>Complementary expression of transmembrane ephrins and their receptors in the mouse spinal cord: a possible role in constraining the orientation of longitudinally projecting axons.</title>
        <authorList>
            <person name="Imondi R."/>
            <person name="Wideman C."/>
            <person name="Kaprielian Z."/>
        </authorList>
    </citation>
    <scope>DEVELOPMENTAL STAGE</scope>
</reference>
<reference key="11">
    <citation type="journal article" date="2000" name="Neuron">
        <title>EphB2 guides axons at the midline and is necessary for normal vestibular function.</title>
        <authorList>
            <person name="Cowan C.A."/>
            <person name="Yokoyama N."/>
            <person name="Bianchi L.M."/>
            <person name="Henkemeyer M."/>
            <person name="Fritzsch B."/>
        </authorList>
    </citation>
    <scope>DISRUPTION PHENOTYPE</scope>
    <scope>FUNCTION IN AXON GUIDANCE</scope>
    <scope>FUNCTION IN INNER EAR DEVELOPMENT</scope>
    <scope>INTERACTION WITH AQP1</scope>
    <scope>TISSUE SPECIFICITY</scope>
    <scope>DEVELOPMENTAL STAGE</scope>
</reference>
<reference key="12">
    <citation type="journal article" date="2003" name="J. Cell Biol.">
        <title>Multiple EphB receptor tyrosine kinases shape dendritic spines in the hippocampus.</title>
        <authorList>
            <person name="Henkemeyer M."/>
            <person name="Itkis O.S."/>
            <person name="Ngo M."/>
            <person name="Hickmott P.W."/>
            <person name="Ethell I.M."/>
        </authorList>
    </citation>
    <scope>FUNCTION IN DENDRITIC SPINE DEVELOPMENT</scope>
    <scope>FUNCTION IN EXCITATORY SYNAPSE FORMATION</scope>
    <scope>SUBCELLULAR LOCATION</scope>
</reference>
<reference key="13">
    <citation type="journal article" date="2004" name="Dev. Biol.">
        <title>Bidirectional signaling mediated by ephrin-B2 and EphB2 controls urorectal development.</title>
        <authorList>
            <person name="Dravis C."/>
            <person name="Yokoyama N."/>
            <person name="Chumley M.J."/>
            <person name="Cowan C.A."/>
            <person name="Silvany R.E."/>
            <person name="Shay J."/>
            <person name="Baker L.A."/>
            <person name="Henkemeyer M."/>
        </authorList>
    </citation>
    <scope>FUNCTION IN URORECTAL DEVELOPMENT</scope>
</reference>
<reference key="14">
    <citation type="journal article" date="2007" name="J. Biol. Chem.">
        <title>Ligand binding and calcium influx induce distinct ectodomain/gamma-secretase-processing pathways of EphB2 receptor.</title>
        <authorList>
            <person name="Litterst C."/>
            <person name="Georgakopoulos A."/>
            <person name="Shioi J."/>
            <person name="Ghersi E."/>
            <person name="Wisniewski T."/>
            <person name="Wang R."/>
            <person name="Ludwig A."/>
            <person name="Robakis N.K."/>
        </authorList>
    </citation>
    <scope>PROTEIN SEQUENCE OF 536-545</scope>
    <scope>UBIQUITINATION</scope>
    <scope>PHOSPHORYLATION</scope>
    <scope>PROTEOLYTIC PROCESSING</scope>
    <scope>IDENTIFICATION BY MASS SPECTROMETRY</scope>
</reference>
<reference key="15">
    <citation type="journal article" date="2009" name="Mol. Cell. Proteomics">
        <title>The mouse C2C12 myoblast cell surface N-linked glycoproteome: identification, glycosite occupancy, and membrane orientation.</title>
        <authorList>
            <person name="Gundry R.L."/>
            <person name="Raginski K."/>
            <person name="Tarasova Y."/>
            <person name="Tchernyshyov I."/>
            <person name="Bausch-Fluck D."/>
            <person name="Elliott S.T."/>
            <person name="Boheler K.R."/>
            <person name="Van Eyk J.E."/>
            <person name="Wollscheid B."/>
        </authorList>
    </citation>
    <scope>GLYCOSYLATION [LARGE SCALE ANALYSIS] AT ASN-482</scope>
    <source>
        <tissue>Myoblast</tissue>
    </source>
</reference>
<reference key="16">
    <citation type="journal article" date="2009" name="Nat. Biotechnol.">
        <title>Mass-spectrometric identification and relative quantification of N-linked cell surface glycoproteins.</title>
        <authorList>
            <person name="Wollscheid B."/>
            <person name="Bausch-Fluck D."/>
            <person name="Henderson C."/>
            <person name="O'Brien R."/>
            <person name="Bibel M."/>
            <person name="Schiess R."/>
            <person name="Aebersold R."/>
            <person name="Watts J.D."/>
        </authorList>
    </citation>
    <scope>GLYCOSYLATION [LARGE SCALE ANALYSIS] AT ASN-265</scope>
</reference>
<reference key="17">
    <citation type="journal article" date="2010" name="Cell">
        <title>A tissue-specific atlas of mouse protein phosphorylation and expression.</title>
        <authorList>
            <person name="Huttlin E.L."/>
            <person name="Jedrychowski M.P."/>
            <person name="Elias J.E."/>
            <person name="Goswami T."/>
            <person name="Rad R."/>
            <person name="Beausoleil S.A."/>
            <person name="Villen J."/>
            <person name="Haas W."/>
            <person name="Sowa M.E."/>
            <person name="Gygi S.P."/>
        </authorList>
    </citation>
    <scope>IDENTIFICATION BY MASS SPECTROMETRY [LARGE SCALE ANALYSIS]</scope>
    <source>
        <tissue>Brain</tissue>
        <tissue>Kidney</tissue>
    </source>
</reference>
<reference key="18">
    <citation type="journal article" date="2010" name="Cell">
        <title>EphB-mediated degradation of the RhoA GEF Ephexin5 relieves a developmental brake on excitatory synapse formation.</title>
        <authorList>
            <person name="Margolis S.S."/>
            <person name="Salogiannis J."/>
            <person name="Lipton D.M."/>
            <person name="Mandel-Brehm C."/>
            <person name="Wills Z.P."/>
            <person name="Mardinly A.R."/>
            <person name="Hu L."/>
            <person name="Greer P.L."/>
            <person name="Bikoff J.B."/>
            <person name="Ho H.Y."/>
            <person name="Soskis M.J."/>
            <person name="Sahin M."/>
            <person name="Greenberg M.E."/>
        </authorList>
    </citation>
    <scope>FUNCTION IN EXCITATORY SYNAPSE FORMATION</scope>
    <scope>FUNCTION IN PHOSPHORYLATION OF ARHGEF15</scope>
    <scope>INTERACTION WITH ARHGEF15</scope>
</reference>
<reference key="19">
    <citation type="journal article" date="2016" name="Front. Cell Dev. Biol.">
        <title>Gene expression profiling of muscle stem cells identifies novel regulators of postnatal myogenesis.</title>
        <authorList>
            <person name="Alonso-Martin S."/>
            <person name="Rochat A."/>
            <person name="Mademtzoglou D."/>
            <person name="Morais J."/>
            <person name="de Reynies A."/>
            <person name="Aurade F."/>
            <person name="Chang T.H."/>
            <person name="Zammit P.S."/>
            <person name="Relaix F."/>
        </authorList>
    </citation>
    <scope>DEVELOPMENTAL STAGE</scope>
    <scope>TISSUE SPECIFICITY</scope>
</reference>
<reference key="20">
    <citation type="journal article" date="2017" name="Mol. Biol. Cell">
        <title>Ubiquitin ligase SPSB4 diminishes cell repulsive responses mediated by EphB2.</title>
        <authorList>
            <person name="Okumura F."/>
            <person name="Joo-Okumura A."/>
            <person name="Obara K."/>
            <person name="Petersen A."/>
            <person name="Nishikimi A."/>
            <person name="Fukui Y."/>
            <person name="Nakatsukasa K."/>
            <person name="Kamura T."/>
        </authorList>
    </citation>
    <scope>POLYUBIQUITINATION</scope>
    <scope>INTERACTION WITH SPSB4</scope>
    <scope>MUTAGENESIS OF TYR-596 AND TYR-602</scope>
</reference>
<reference key="21">
    <citation type="journal article" date="1998" name="Nature">
        <title>Crystal structure of the ligand-binding domain of the receptor tyrosine kinase EphB2.</title>
        <authorList>
            <person name="Himanen J.-P."/>
            <person name="Henkemeyer M."/>
            <person name="Nikolov D.B."/>
        </authorList>
    </citation>
    <scope>X-RAY CRYSTALLOGRAPHY (2.9 ANGSTROMS) OF 21-196</scope>
</reference>
<reference key="22">
    <citation type="journal article" date="2001" name="Nature">
        <title>Crystal structure of an Eph receptor-ephrin complex.</title>
        <authorList>
            <person name="Himanen J.-P."/>
            <person name="Rajashankar K.R."/>
            <person name="Lackmann M."/>
            <person name="Cowan C.A."/>
            <person name="Henkemeyer M."/>
            <person name="Nikolov D.B."/>
        </authorList>
    </citation>
    <scope>X-RAY CRYSTALLOGRAPHY (2.7 ANGSTROMS) OF 21-200 IN COMPLEX WITH EFNB2</scope>
    <scope>DISULFIDE BOND</scope>
    <scope>SUBUNIT</scope>
</reference>
<reference key="23">
    <citation type="journal article" date="2004" name="Nat. Neurosci.">
        <title>Repelling class discrimination: ephrin-A5 binds to and activates EphB2 receptor signaling.</title>
        <authorList>
            <person name="Himanen J.P."/>
            <person name="Chumley M.J."/>
            <person name="Lackmann M."/>
            <person name="Li C."/>
            <person name="Barton W.A."/>
            <person name="Jeffrey P.D."/>
            <person name="Vearing C."/>
            <person name="Geleick D."/>
            <person name="Feldheim D.A."/>
            <person name="Boyd A.W."/>
            <person name="Henkemeyer M."/>
            <person name="Nikolov D.B."/>
        </authorList>
    </citation>
    <scope>X-RAY CRYSTALLOGRAPHY (2.2 ANGSTROMS) OF 19-199 IN COMPLEX WITH EFNA5</scope>
    <scope>INTERACTION WITH EFNA5</scope>
</reference>
<proteinExistence type="evidence at protein level"/>
<dbReference type="EC" id="2.7.10.1"/>
<dbReference type="EMBL" id="JH584273">
    <property type="status" value="NOT_ANNOTATED_CDS"/>
    <property type="molecule type" value="Genomic_DNA"/>
</dbReference>
<dbReference type="EMBL" id="BC043088">
    <property type="protein sequence ID" value="AAH43088.2"/>
    <property type="molecule type" value="mRNA"/>
</dbReference>
<dbReference type="EMBL" id="BC062924">
    <property type="protein sequence ID" value="AAH62924.1"/>
    <property type="status" value="ALT_INIT"/>
    <property type="molecule type" value="mRNA"/>
</dbReference>
<dbReference type="EMBL" id="L25890">
    <property type="protein sequence ID" value="AAA72411.1"/>
    <property type="status" value="ALT_INIT"/>
    <property type="molecule type" value="mRNA"/>
</dbReference>
<dbReference type="EMBL" id="X76011">
    <property type="protein sequence ID" value="CAA53598.1"/>
    <property type="molecule type" value="mRNA"/>
</dbReference>
<dbReference type="RefSeq" id="NP_001277682.1">
    <molecule id="P54763-4"/>
    <property type="nucleotide sequence ID" value="NM_001290753.2"/>
</dbReference>
<dbReference type="RefSeq" id="NP_034272.1">
    <molecule id="P54763-3"/>
    <property type="nucleotide sequence ID" value="NM_010142.4"/>
</dbReference>
<dbReference type="RefSeq" id="XP_006538594.1">
    <molecule id="P54763-2"/>
    <property type="nucleotide sequence ID" value="XM_006538531.5"/>
</dbReference>
<dbReference type="PDB" id="1JPA">
    <property type="method" value="X-ray"/>
    <property type="resolution" value="1.91 A"/>
    <property type="chains" value="A/B=587-898"/>
</dbReference>
<dbReference type="PDB" id="1KGY">
    <property type="method" value="X-ray"/>
    <property type="resolution" value="2.70 A"/>
    <property type="chains" value="A/B/C/D=20-199"/>
</dbReference>
<dbReference type="PDB" id="1NUK">
    <property type="method" value="X-ray"/>
    <property type="resolution" value="2.90 A"/>
    <property type="chains" value="A=20-202"/>
</dbReference>
<dbReference type="PDB" id="1SHW">
    <property type="method" value="X-ray"/>
    <property type="resolution" value="2.20 A"/>
    <property type="chains" value="B=19-199"/>
</dbReference>
<dbReference type="PDB" id="2HEN">
    <property type="method" value="X-ray"/>
    <property type="resolution" value="2.60 A"/>
    <property type="chains" value="A/B/C/D=614-898"/>
</dbReference>
<dbReference type="PDB" id="3ETP">
    <property type="method" value="X-ray"/>
    <property type="resolution" value="2.00 A"/>
    <property type="chains" value="A=20-199"/>
</dbReference>
<dbReference type="PDB" id="7S7K">
    <property type="method" value="X-ray"/>
    <property type="resolution" value="3.15 A"/>
    <property type="chains" value="A=19-543"/>
</dbReference>
<dbReference type="PDBsum" id="1JPA"/>
<dbReference type="PDBsum" id="1KGY"/>
<dbReference type="PDBsum" id="1NUK"/>
<dbReference type="PDBsum" id="1SHW"/>
<dbReference type="PDBsum" id="2HEN"/>
<dbReference type="PDBsum" id="3ETP"/>
<dbReference type="PDBsum" id="7S7K"/>
<dbReference type="BMRB" id="P54763"/>
<dbReference type="SMR" id="P54763"/>
<dbReference type="CORUM" id="P54763"/>
<dbReference type="DIP" id="DIP-34917N"/>
<dbReference type="FunCoup" id="P54763">
    <property type="interactions" value="848"/>
</dbReference>
<dbReference type="IntAct" id="P54763">
    <property type="interactions" value="15"/>
</dbReference>
<dbReference type="MINT" id="P54763"/>
<dbReference type="STRING" id="10090.ENSMUSP00000058135"/>
<dbReference type="BindingDB" id="P54763"/>
<dbReference type="ChEMBL" id="CHEMBL5961"/>
<dbReference type="GuidetoPHARMACOLOGY" id="1831"/>
<dbReference type="GlyCosmos" id="P54763">
    <property type="glycosylation" value="4 sites, No reported glycans"/>
</dbReference>
<dbReference type="GlyGen" id="P54763">
    <property type="glycosylation" value="4 sites, 2 N-linked glycans (2 sites)"/>
</dbReference>
<dbReference type="iPTMnet" id="P54763"/>
<dbReference type="PhosphoSitePlus" id="P54763"/>
<dbReference type="SwissPalm" id="P54763"/>
<dbReference type="jPOST" id="P54763"/>
<dbReference type="PaxDb" id="10090-ENSMUSP00000101472"/>
<dbReference type="ProteomicsDB" id="275934">
    <molecule id="P54763-3"/>
</dbReference>
<dbReference type="ProteomicsDB" id="275935">
    <molecule id="P54763-2"/>
</dbReference>
<dbReference type="ProteomicsDB" id="275936">
    <molecule id="P54763-4"/>
</dbReference>
<dbReference type="Pumba" id="P54763"/>
<dbReference type="Antibodypedia" id="30106">
    <property type="antibodies" value="653 antibodies from 41 providers"/>
</dbReference>
<dbReference type="DNASU" id="13844"/>
<dbReference type="Ensembl" id="ENSMUST00000059287.14">
    <molecule id="P54763-4"/>
    <property type="protein sequence ID" value="ENSMUSP00000058135.8"/>
    <property type="gene ID" value="ENSMUSG00000028664.15"/>
</dbReference>
<dbReference type="Ensembl" id="ENSMUST00000105845.9">
    <molecule id="P54763-3"/>
    <property type="protein sequence ID" value="ENSMUSP00000101471.3"/>
    <property type="gene ID" value="ENSMUSG00000028664.15"/>
</dbReference>
<dbReference type="Ensembl" id="ENSMUST00000105846.9">
    <molecule id="P54763-2"/>
    <property type="protein sequence ID" value="ENSMUSP00000101472.3"/>
    <property type="gene ID" value="ENSMUSG00000028664.15"/>
</dbReference>
<dbReference type="GeneID" id="13844"/>
<dbReference type="KEGG" id="mmu:13844"/>
<dbReference type="UCSC" id="uc008vim.2">
    <property type="organism name" value="mouse"/>
</dbReference>
<dbReference type="UCSC" id="uc008vin.2">
    <property type="organism name" value="mouse"/>
</dbReference>
<dbReference type="AGR" id="MGI:99611"/>
<dbReference type="CTD" id="2048"/>
<dbReference type="MGI" id="MGI:99611">
    <property type="gene designation" value="Ephb2"/>
</dbReference>
<dbReference type="VEuPathDB" id="HostDB:ENSMUSG00000028664"/>
<dbReference type="eggNOG" id="KOG0196">
    <property type="taxonomic scope" value="Eukaryota"/>
</dbReference>
<dbReference type="GeneTree" id="ENSGT00940000155503"/>
<dbReference type="InParanoid" id="P54763"/>
<dbReference type="OMA" id="GAINCIC"/>
<dbReference type="TreeFam" id="TF315608"/>
<dbReference type="BRENDA" id="2.7.10.1">
    <property type="organism ID" value="3474"/>
</dbReference>
<dbReference type="Reactome" id="R-MMU-2682334">
    <property type="pathway name" value="EPH-Ephrin signaling"/>
</dbReference>
<dbReference type="Reactome" id="R-MMU-3928662">
    <property type="pathway name" value="EPHB-mediated forward signaling"/>
</dbReference>
<dbReference type="Reactome" id="R-MMU-3928664">
    <property type="pathway name" value="Ephrin signaling"/>
</dbReference>
<dbReference type="Reactome" id="R-MMU-3928665">
    <property type="pathway name" value="EPH-ephrin mediated repulsion of cells"/>
</dbReference>
<dbReference type="BioGRID-ORCS" id="13844">
    <property type="hits" value="2 hits in 80 CRISPR screens"/>
</dbReference>
<dbReference type="ChiTaRS" id="Ephb2">
    <property type="organism name" value="mouse"/>
</dbReference>
<dbReference type="EvolutionaryTrace" id="P54763"/>
<dbReference type="PRO" id="PR:P54763"/>
<dbReference type="Proteomes" id="UP000000589">
    <property type="component" value="Chromosome 4"/>
</dbReference>
<dbReference type="RNAct" id="P54763">
    <property type="molecule type" value="protein"/>
</dbReference>
<dbReference type="Bgee" id="ENSMUSG00000028664">
    <property type="expression patterns" value="Expressed in floor plate of midbrain and 254 other cell types or tissues"/>
</dbReference>
<dbReference type="ExpressionAtlas" id="P54763">
    <property type="expression patterns" value="baseline and differential"/>
</dbReference>
<dbReference type="GO" id="GO:0030424">
    <property type="term" value="C:axon"/>
    <property type="evidence" value="ECO:0000314"/>
    <property type="project" value="UniProtKB"/>
</dbReference>
<dbReference type="GO" id="GO:0009986">
    <property type="term" value="C:cell surface"/>
    <property type="evidence" value="ECO:0007669"/>
    <property type="project" value="Ensembl"/>
</dbReference>
<dbReference type="GO" id="GO:0030425">
    <property type="term" value="C:dendrite"/>
    <property type="evidence" value="ECO:0000314"/>
    <property type="project" value="UniProtKB"/>
</dbReference>
<dbReference type="GO" id="GO:0043197">
    <property type="term" value="C:dendritic spine"/>
    <property type="evidence" value="ECO:0007669"/>
    <property type="project" value="Ensembl"/>
</dbReference>
<dbReference type="GO" id="GO:0098978">
    <property type="term" value="C:glutamatergic synapse"/>
    <property type="evidence" value="ECO:0000314"/>
    <property type="project" value="SynGO"/>
</dbReference>
<dbReference type="GO" id="GO:0098686">
    <property type="term" value="C:hippocampal mossy fiber to CA3 synapse"/>
    <property type="evidence" value="ECO:0000314"/>
    <property type="project" value="SynGO"/>
</dbReference>
<dbReference type="GO" id="GO:0043025">
    <property type="term" value="C:neuronal cell body"/>
    <property type="evidence" value="ECO:0000314"/>
    <property type="project" value="MGI"/>
</dbReference>
<dbReference type="GO" id="GO:0005654">
    <property type="term" value="C:nucleoplasm"/>
    <property type="evidence" value="ECO:0007669"/>
    <property type="project" value="Ensembl"/>
</dbReference>
<dbReference type="GO" id="GO:0005886">
    <property type="term" value="C:plasma membrane"/>
    <property type="evidence" value="ECO:0000314"/>
    <property type="project" value="UniProtKB"/>
</dbReference>
<dbReference type="GO" id="GO:0045211">
    <property type="term" value="C:postsynaptic membrane"/>
    <property type="evidence" value="ECO:0000314"/>
    <property type="project" value="SynGO"/>
</dbReference>
<dbReference type="GO" id="GO:0042734">
    <property type="term" value="C:presynaptic membrane"/>
    <property type="evidence" value="ECO:0000314"/>
    <property type="project" value="SynGO"/>
</dbReference>
<dbReference type="GO" id="GO:0045202">
    <property type="term" value="C:synapse"/>
    <property type="evidence" value="ECO:0000303"/>
    <property type="project" value="UniProtKB"/>
</dbReference>
<dbReference type="GO" id="GO:0001540">
    <property type="term" value="F:amyloid-beta binding"/>
    <property type="evidence" value="ECO:0000353"/>
    <property type="project" value="ARUK-UCL"/>
</dbReference>
<dbReference type="GO" id="GO:0005524">
    <property type="term" value="F:ATP binding"/>
    <property type="evidence" value="ECO:0007669"/>
    <property type="project" value="UniProtKB-KW"/>
</dbReference>
<dbReference type="GO" id="GO:0008046">
    <property type="term" value="F:axon guidance receptor activity"/>
    <property type="evidence" value="ECO:0000314"/>
    <property type="project" value="MGI"/>
</dbReference>
<dbReference type="GO" id="GO:0005003">
    <property type="term" value="F:ephrin receptor activity"/>
    <property type="evidence" value="ECO:0000314"/>
    <property type="project" value="MGI"/>
</dbReference>
<dbReference type="GO" id="GO:0042802">
    <property type="term" value="F:identical protein binding"/>
    <property type="evidence" value="ECO:0000353"/>
    <property type="project" value="IntAct"/>
</dbReference>
<dbReference type="GO" id="GO:0004713">
    <property type="term" value="F:protein tyrosine kinase activity"/>
    <property type="evidence" value="ECO:0000314"/>
    <property type="project" value="UniProtKB"/>
</dbReference>
<dbReference type="GO" id="GO:0044877">
    <property type="term" value="F:protein-containing complex binding"/>
    <property type="evidence" value="ECO:0000353"/>
    <property type="project" value="ARUK-UCL"/>
</dbReference>
<dbReference type="GO" id="GO:0038023">
    <property type="term" value="F:signaling receptor activity"/>
    <property type="evidence" value="ECO:0000314"/>
    <property type="project" value="MGI"/>
</dbReference>
<dbReference type="GO" id="GO:0005102">
    <property type="term" value="F:signaling receptor binding"/>
    <property type="evidence" value="ECO:0000353"/>
    <property type="project" value="MGI"/>
</dbReference>
<dbReference type="GO" id="GO:0005005">
    <property type="term" value="F:transmembrane-ephrin receptor activity"/>
    <property type="evidence" value="ECO:0000314"/>
    <property type="project" value="UniProtKB"/>
</dbReference>
<dbReference type="GO" id="GO:0001525">
    <property type="term" value="P:angiogenesis"/>
    <property type="evidence" value="ECO:0000315"/>
    <property type="project" value="UniProtKB"/>
</dbReference>
<dbReference type="GO" id="GO:0009887">
    <property type="term" value="P:animal organ morphogenesis"/>
    <property type="evidence" value="ECO:0000315"/>
    <property type="project" value="MGI"/>
</dbReference>
<dbReference type="GO" id="GO:0007411">
    <property type="term" value="P:axon guidance"/>
    <property type="evidence" value="ECO:0000314"/>
    <property type="project" value="MGI"/>
</dbReference>
<dbReference type="GO" id="GO:0007413">
    <property type="term" value="P:axonal fasciculation"/>
    <property type="evidence" value="ECO:0000315"/>
    <property type="project" value="UniProtKB"/>
</dbReference>
<dbReference type="GO" id="GO:0007409">
    <property type="term" value="P:axonogenesis"/>
    <property type="evidence" value="ECO:0000314"/>
    <property type="project" value="MGI"/>
</dbReference>
<dbReference type="GO" id="GO:0042113">
    <property type="term" value="P:B cell activation"/>
    <property type="evidence" value="ECO:0007669"/>
    <property type="project" value="Ensembl"/>
</dbReference>
<dbReference type="GO" id="GO:0048593">
    <property type="term" value="P:camera-type eye morphogenesis"/>
    <property type="evidence" value="ECO:0000315"/>
    <property type="project" value="MGI"/>
</dbReference>
<dbReference type="GO" id="GO:0000902">
    <property type="term" value="P:cell morphogenesis"/>
    <property type="evidence" value="ECO:0000316"/>
    <property type="project" value="MGI"/>
</dbReference>
<dbReference type="GO" id="GO:0007169">
    <property type="term" value="P:cell surface receptor protein tyrosine kinase signaling pathway"/>
    <property type="evidence" value="ECO:0000314"/>
    <property type="project" value="MGI"/>
</dbReference>
<dbReference type="GO" id="GO:1904646">
    <property type="term" value="P:cellular response to amyloid-beta"/>
    <property type="evidence" value="ECO:0007669"/>
    <property type="project" value="Ensembl"/>
</dbReference>
<dbReference type="GO" id="GO:0071222">
    <property type="term" value="P:cellular response to lipopolysaccharide"/>
    <property type="evidence" value="ECO:0007669"/>
    <property type="project" value="Ensembl"/>
</dbReference>
<dbReference type="GO" id="GO:0021952">
    <property type="term" value="P:central nervous system projection neuron axonogenesis"/>
    <property type="evidence" value="ECO:0000315"/>
    <property type="project" value="MGI"/>
</dbReference>
<dbReference type="GO" id="GO:0071679">
    <property type="term" value="P:commissural neuron axon guidance"/>
    <property type="evidence" value="ECO:0000315"/>
    <property type="project" value="UniProtKB"/>
</dbReference>
<dbReference type="GO" id="GO:0022038">
    <property type="term" value="P:corpus callosum development"/>
    <property type="evidence" value="ECO:0000315"/>
    <property type="project" value="UniProtKB"/>
</dbReference>
<dbReference type="GO" id="GO:0060996">
    <property type="term" value="P:dendritic spine development"/>
    <property type="evidence" value="ECO:0000315"/>
    <property type="project" value="UniProtKB"/>
</dbReference>
<dbReference type="GO" id="GO:0060997">
    <property type="term" value="P:dendritic spine morphogenesis"/>
    <property type="evidence" value="ECO:0000314"/>
    <property type="project" value="MGI"/>
</dbReference>
<dbReference type="GO" id="GO:0048013">
    <property type="term" value="P:ephrin receptor signaling pathway"/>
    <property type="evidence" value="ECO:0000314"/>
    <property type="project" value="UniProtKB"/>
</dbReference>
<dbReference type="GO" id="GO:0021934">
    <property type="term" value="P:hindbrain tangential cell migration"/>
    <property type="evidence" value="ECO:0007669"/>
    <property type="project" value="Ensembl"/>
</dbReference>
<dbReference type="GO" id="GO:0042472">
    <property type="term" value="P:inner ear morphogenesis"/>
    <property type="evidence" value="ECO:0000315"/>
    <property type="project" value="UniProtKB"/>
</dbReference>
<dbReference type="GO" id="GO:0007612">
    <property type="term" value="P:learning"/>
    <property type="evidence" value="ECO:0000315"/>
    <property type="project" value="MGI"/>
</dbReference>
<dbReference type="GO" id="GO:0007611">
    <property type="term" value="P:learning or memory"/>
    <property type="evidence" value="ECO:0000316"/>
    <property type="project" value="ARUK-UCL"/>
</dbReference>
<dbReference type="GO" id="GO:0050771">
    <property type="term" value="P:negative regulation of axonogenesis"/>
    <property type="evidence" value="ECO:0000314"/>
    <property type="project" value="MGI"/>
</dbReference>
<dbReference type="GO" id="GO:0007162">
    <property type="term" value="P:negative regulation of cell adhesion"/>
    <property type="evidence" value="ECO:0007669"/>
    <property type="project" value="Ensembl"/>
</dbReference>
<dbReference type="GO" id="GO:1900016">
    <property type="term" value="P:negative regulation of cytokine production involved in inflammatory response"/>
    <property type="evidence" value="ECO:0007669"/>
    <property type="project" value="Ensembl"/>
</dbReference>
<dbReference type="GO" id="GO:0070373">
    <property type="term" value="P:negative regulation of ERK1 and ERK2 cascade"/>
    <property type="evidence" value="ECO:0000314"/>
    <property type="project" value="ARUK-UCL"/>
</dbReference>
<dbReference type="GO" id="GO:1900450">
    <property type="term" value="P:negative regulation of glutamate receptor signaling pathway"/>
    <property type="evidence" value="ECO:0000315"/>
    <property type="project" value="ARUK-UCL"/>
</dbReference>
<dbReference type="GO" id="GO:0046580">
    <property type="term" value="P:negative regulation of Ras protein signal transduction"/>
    <property type="evidence" value="ECO:0000314"/>
    <property type="project" value="ARUK-UCL"/>
</dbReference>
<dbReference type="GO" id="GO:1990535">
    <property type="term" value="P:neuron projection maintenance"/>
    <property type="evidence" value="ECO:0000314"/>
    <property type="project" value="ARUK-UCL"/>
</dbReference>
<dbReference type="GO" id="GO:0106028">
    <property type="term" value="P:neuron projection retraction"/>
    <property type="evidence" value="ECO:0000314"/>
    <property type="project" value="ARUK-UCL"/>
</dbReference>
<dbReference type="GO" id="GO:0021631">
    <property type="term" value="P:optic nerve morphogenesis"/>
    <property type="evidence" value="ECO:0000315"/>
    <property type="project" value="MGI"/>
</dbReference>
<dbReference type="GO" id="GO:0018108">
    <property type="term" value="P:peptidyl-tyrosine phosphorylation"/>
    <property type="evidence" value="ECO:0000314"/>
    <property type="project" value="UniProtKB"/>
</dbReference>
<dbReference type="GO" id="GO:0016310">
    <property type="term" value="P:phosphorylation"/>
    <property type="evidence" value="ECO:0000314"/>
    <property type="project" value="UniProtKB"/>
</dbReference>
<dbReference type="GO" id="GO:0030890">
    <property type="term" value="P:positive regulation of B cell proliferation"/>
    <property type="evidence" value="ECO:0007669"/>
    <property type="project" value="Ensembl"/>
</dbReference>
<dbReference type="GO" id="GO:0030335">
    <property type="term" value="P:positive regulation of cell migration"/>
    <property type="evidence" value="ECO:0007669"/>
    <property type="project" value="Ensembl"/>
</dbReference>
<dbReference type="GO" id="GO:0061003">
    <property type="term" value="P:positive regulation of dendritic spine morphogenesis"/>
    <property type="evidence" value="ECO:0007669"/>
    <property type="project" value="Ensembl"/>
</dbReference>
<dbReference type="GO" id="GO:1900451">
    <property type="term" value="P:positive regulation of glutamate receptor signaling pathway"/>
    <property type="evidence" value="ECO:0000315"/>
    <property type="project" value="ARUK-UCL"/>
</dbReference>
<dbReference type="GO" id="GO:0002639">
    <property type="term" value="P:positive regulation of immunoglobulin production"/>
    <property type="evidence" value="ECO:0007669"/>
    <property type="project" value="Ensembl"/>
</dbReference>
<dbReference type="GO" id="GO:0048170">
    <property type="term" value="P:positive regulation of long-term neuronal synaptic plasticity"/>
    <property type="evidence" value="ECO:0000315"/>
    <property type="project" value="MGI"/>
</dbReference>
<dbReference type="GO" id="GO:1900273">
    <property type="term" value="P:positive regulation of long-term synaptic potentiation"/>
    <property type="evidence" value="ECO:0000315"/>
    <property type="project" value="ARUK-UCL"/>
</dbReference>
<dbReference type="GO" id="GO:2000010">
    <property type="term" value="P:positive regulation of protein localization to cell surface"/>
    <property type="evidence" value="ECO:0007669"/>
    <property type="project" value="Ensembl"/>
</dbReference>
<dbReference type="GO" id="GO:0051965">
    <property type="term" value="P:positive regulation of synapse assembly"/>
    <property type="evidence" value="ECO:0000314"/>
    <property type="project" value="UniProtKB"/>
</dbReference>
<dbReference type="GO" id="GO:0031915">
    <property type="term" value="P:positive regulation of synaptic plasticity"/>
    <property type="evidence" value="ECO:0000316"/>
    <property type="project" value="ARUK-UCL"/>
</dbReference>
<dbReference type="GO" id="GO:0032760">
    <property type="term" value="P:positive regulation of tumor necrosis factor production"/>
    <property type="evidence" value="ECO:0007669"/>
    <property type="project" value="Ensembl"/>
</dbReference>
<dbReference type="GO" id="GO:0097104">
    <property type="term" value="P:postsynaptic membrane assembly"/>
    <property type="evidence" value="ECO:0007669"/>
    <property type="project" value="Ensembl"/>
</dbReference>
<dbReference type="GO" id="GO:2000785">
    <property type="term" value="P:regulation of autophagosome assembly"/>
    <property type="evidence" value="ECO:0007669"/>
    <property type="project" value="Ensembl"/>
</dbReference>
<dbReference type="GO" id="GO:0050770">
    <property type="term" value="P:regulation of axonogenesis"/>
    <property type="evidence" value="ECO:0000314"/>
    <property type="project" value="MGI"/>
</dbReference>
<dbReference type="GO" id="GO:2000822">
    <property type="term" value="P:regulation of behavioral fear response"/>
    <property type="evidence" value="ECO:0007669"/>
    <property type="project" value="Ensembl"/>
</dbReference>
<dbReference type="GO" id="GO:0030193">
    <property type="term" value="P:regulation of blood coagulation"/>
    <property type="evidence" value="ECO:0000250"/>
    <property type="project" value="UniProtKB"/>
</dbReference>
<dbReference type="GO" id="GO:0050878">
    <property type="term" value="P:regulation of body fluid levels"/>
    <property type="evidence" value="ECO:0000315"/>
    <property type="project" value="UniProtKB"/>
</dbReference>
<dbReference type="GO" id="GO:0051489">
    <property type="term" value="P:regulation of filopodium assembly"/>
    <property type="evidence" value="ECO:0007669"/>
    <property type="project" value="Ensembl"/>
</dbReference>
<dbReference type="GO" id="GO:0048168">
    <property type="term" value="P:regulation of neuronal synaptic plasticity"/>
    <property type="evidence" value="ECO:0000315"/>
    <property type="project" value="MGI"/>
</dbReference>
<dbReference type="GO" id="GO:0046425">
    <property type="term" value="P:regulation of receptor signaling pathway via JAK-STAT"/>
    <property type="evidence" value="ECO:0007669"/>
    <property type="project" value="Ensembl"/>
</dbReference>
<dbReference type="GO" id="GO:0051963">
    <property type="term" value="P:regulation of synapse assembly"/>
    <property type="evidence" value="ECO:0000314"/>
    <property type="project" value="SynGO"/>
</dbReference>
<dbReference type="GO" id="GO:2000316">
    <property type="term" value="P:regulation of T-helper 17 type immune response"/>
    <property type="evidence" value="ECO:0007669"/>
    <property type="project" value="Ensembl"/>
</dbReference>
<dbReference type="GO" id="GO:0031290">
    <property type="term" value="P:retinal ganglion cell axon guidance"/>
    <property type="evidence" value="ECO:0000314"/>
    <property type="project" value="MGI"/>
</dbReference>
<dbReference type="GO" id="GO:0060021">
    <property type="term" value="P:roof of mouth development"/>
    <property type="evidence" value="ECO:0000315"/>
    <property type="project" value="UniProtKB"/>
</dbReference>
<dbReference type="GO" id="GO:0120192">
    <property type="term" value="P:tight junction assembly"/>
    <property type="evidence" value="ECO:0007669"/>
    <property type="project" value="Ensembl"/>
</dbReference>
<dbReference type="GO" id="GO:0001655">
    <property type="term" value="P:urogenital system development"/>
    <property type="evidence" value="ECO:0000315"/>
    <property type="project" value="UniProtKB"/>
</dbReference>
<dbReference type="GO" id="GO:0110077">
    <property type="term" value="P:vesicle-mediated intercellular transport"/>
    <property type="evidence" value="ECO:0007669"/>
    <property type="project" value="Ensembl"/>
</dbReference>
<dbReference type="CDD" id="cd10477">
    <property type="entry name" value="EphR_LBD_B2"/>
    <property type="match status" value="1"/>
</dbReference>
<dbReference type="CDD" id="cd00063">
    <property type="entry name" value="FN3"/>
    <property type="match status" value="2"/>
</dbReference>
<dbReference type="CDD" id="cd05065">
    <property type="entry name" value="PTKc_EphR_B"/>
    <property type="match status" value="1"/>
</dbReference>
<dbReference type="CDD" id="cd09552">
    <property type="entry name" value="SAM_EPH-B2"/>
    <property type="match status" value="1"/>
</dbReference>
<dbReference type="CDD" id="cd00185">
    <property type="entry name" value="TNFRSF"/>
    <property type="match status" value="1"/>
</dbReference>
<dbReference type="FunFam" id="1.10.150.50:FF:000099">
    <property type="entry name" value="EPH receptor B2"/>
    <property type="match status" value="1"/>
</dbReference>
<dbReference type="FunFam" id="2.60.40.10:FF:000041">
    <property type="entry name" value="ephrin type-A receptor 3"/>
    <property type="match status" value="1"/>
</dbReference>
<dbReference type="FunFam" id="2.10.50.10:FF:000001">
    <property type="entry name" value="Ephrin type-A receptor 5"/>
    <property type="match status" value="1"/>
</dbReference>
<dbReference type="FunFam" id="2.60.40.1770:FF:000001">
    <property type="entry name" value="Ephrin type-A receptor 5"/>
    <property type="match status" value="1"/>
</dbReference>
<dbReference type="FunFam" id="3.30.200.20:FF:000001">
    <property type="entry name" value="Ephrin type-A receptor 5"/>
    <property type="match status" value="1"/>
</dbReference>
<dbReference type="FunFam" id="1.10.510.10:FF:000015">
    <property type="entry name" value="Ephrin type-B receptor 2"/>
    <property type="match status" value="1"/>
</dbReference>
<dbReference type="FunFam" id="2.60.120.260:FF:000004">
    <property type="entry name" value="Ephrin type-B receptor 2"/>
    <property type="match status" value="1"/>
</dbReference>
<dbReference type="FunFam" id="2.60.40.10:FF:000110">
    <property type="entry name" value="Ephrin type-B receptor 2"/>
    <property type="match status" value="1"/>
</dbReference>
<dbReference type="Gene3D" id="2.60.40.1770">
    <property type="entry name" value="ephrin a2 ectodomain"/>
    <property type="match status" value="1"/>
</dbReference>
<dbReference type="Gene3D" id="2.60.120.260">
    <property type="entry name" value="Galactose-binding domain-like"/>
    <property type="match status" value="1"/>
</dbReference>
<dbReference type="Gene3D" id="2.60.40.10">
    <property type="entry name" value="Immunoglobulins"/>
    <property type="match status" value="2"/>
</dbReference>
<dbReference type="Gene3D" id="3.30.200.20">
    <property type="entry name" value="Phosphorylase Kinase, domain 1"/>
    <property type="match status" value="1"/>
</dbReference>
<dbReference type="Gene3D" id="1.10.150.50">
    <property type="entry name" value="Transcription Factor, Ets-1"/>
    <property type="match status" value="1"/>
</dbReference>
<dbReference type="Gene3D" id="1.10.510.10">
    <property type="entry name" value="Transferase(Phosphotransferase) domain 1"/>
    <property type="match status" value="1"/>
</dbReference>
<dbReference type="Gene3D" id="2.10.50.10">
    <property type="entry name" value="Tumor Necrosis Factor Receptor, subunit A, domain 2"/>
    <property type="match status" value="1"/>
</dbReference>
<dbReference type="InterPro" id="IPR027936">
    <property type="entry name" value="Eph_TM"/>
</dbReference>
<dbReference type="InterPro" id="IPR034238">
    <property type="entry name" value="EphB2_rcpt_lig-bd"/>
</dbReference>
<dbReference type="InterPro" id="IPR001090">
    <property type="entry name" value="Ephrin_rcpt_lig-bd_dom"/>
</dbReference>
<dbReference type="InterPro" id="IPR050449">
    <property type="entry name" value="Ephrin_rcpt_TKs"/>
</dbReference>
<dbReference type="InterPro" id="IPR003961">
    <property type="entry name" value="FN3_dom"/>
</dbReference>
<dbReference type="InterPro" id="IPR036116">
    <property type="entry name" value="FN3_sf"/>
</dbReference>
<dbReference type="InterPro" id="IPR008979">
    <property type="entry name" value="Galactose-bd-like_sf"/>
</dbReference>
<dbReference type="InterPro" id="IPR009030">
    <property type="entry name" value="Growth_fac_rcpt_cys_sf"/>
</dbReference>
<dbReference type="InterPro" id="IPR013783">
    <property type="entry name" value="Ig-like_fold"/>
</dbReference>
<dbReference type="InterPro" id="IPR011009">
    <property type="entry name" value="Kinase-like_dom_sf"/>
</dbReference>
<dbReference type="InterPro" id="IPR000719">
    <property type="entry name" value="Prot_kinase_dom"/>
</dbReference>
<dbReference type="InterPro" id="IPR017441">
    <property type="entry name" value="Protein_kinase_ATP_BS"/>
</dbReference>
<dbReference type="InterPro" id="IPR001660">
    <property type="entry name" value="SAM"/>
</dbReference>
<dbReference type="InterPro" id="IPR013761">
    <property type="entry name" value="SAM/pointed_sf"/>
</dbReference>
<dbReference type="InterPro" id="IPR001245">
    <property type="entry name" value="Ser-Thr/Tyr_kinase_cat_dom"/>
</dbReference>
<dbReference type="InterPro" id="IPR011641">
    <property type="entry name" value="Tyr-kin_ephrin_A/B_rcpt-like"/>
</dbReference>
<dbReference type="InterPro" id="IPR008266">
    <property type="entry name" value="Tyr_kinase_AS"/>
</dbReference>
<dbReference type="InterPro" id="IPR020635">
    <property type="entry name" value="Tyr_kinase_cat_dom"/>
</dbReference>
<dbReference type="InterPro" id="IPR016257">
    <property type="entry name" value="Tyr_kinase_ephrin_rcpt"/>
</dbReference>
<dbReference type="InterPro" id="IPR001426">
    <property type="entry name" value="Tyr_kinase_rcpt_V_CS"/>
</dbReference>
<dbReference type="PANTHER" id="PTHR46877">
    <property type="entry name" value="EPH RECEPTOR A5"/>
    <property type="match status" value="1"/>
</dbReference>
<dbReference type="PANTHER" id="PTHR46877:SF11">
    <property type="entry name" value="EPHRIN TYPE-B RECEPTOR 2"/>
    <property type="match status" value="1"/>
</dbReference>
<dbReference type="Pfam" id="PF14575">
    <property type="entry name" value="EphA2_TM"/>
    <property type="match status" value="1"/>
</dbReference>
<dbReference type="Pfam" id="PF01404">
    <property type="entry name" value="Ephrin_lbd"/>
    <property type="match status" value="1"/>
</dbReference>
<dbReference type="Pfam" id="PF07699">
    <property type="entry name" value="Ephrin_rec_like"/>
    <property type="match status" value="1"/>
</dbReference>
<dbReference type="Pfam" id="PF00041">
    <property type="entry name" value="fn3"/>
    <property type="match status" value="2"/>
</dbReference>
<dbReference type="Pfam" id="PF07714">
    <property type="entry name" value="PK_Tyr_Ser-Thr"/>
    <property type="match status" value="1"/>
</dbReference>
<dbReference type="Pfam" id="PF00536">
    <property type="entry name" value="SAM_1"/>
    <property type="match status" value="1"/>
</dbReference>
<dbReference type="PIRSF" id="PIRSF000666">
    <property type="entry name" value="TyrPK_ephrin_receptor"/>
    <property type="match status" value="1"/>
</dbReference>
<dbReference type="PRINTS" id="PR00014">
    <property type="entry name" value="FNTYPEIII"/>
</dbReference>
<dbReference type="PRINTS" id="PR00109">
    <property type="entry name" value="TYRKINASE"/>
</dbReference>
<dbReference type="SMART" id="SM00615">
    <property type="entry name" value="EPH_lbd"/>
    <property type="match status" value="1"/>
</dbReference>
<dbReference type="SMART" id="SM01411">
    <property type="entry name" value="Ephrin_rec_like"/>
    <property type="match status" value="1"/>
</dbReference>
<dbReference type="SMART" id="SM00060">
    <property type="entry name" value="FN3"/>
    <property type="match status" value="2"/>
</dbReference>
<dbReference type="SMART" id="SM00454">
    <property type="entry name" value="SAM"/>
    <property type="match status" value="1"/>
</dbReference>
<dbReference type="SMART" id="SM00219">
    <property type="entry name" value="TyrKc"/>
    <property type="match status" value="1"/>
</dbReference>
<dbReference type="SUPFAM" id="SSF49265">
    <property type="entry name" value="Fibronectin type III"/>
    <property type="match status" value="1"/>
</dbReference>
<dbReference type="SUPFAM" id="SSF49785">
    <property type="entry name" value="Galactose-binding domain-like"/>
    <property type="match status" value="1"/>
</dbReference>
<dbReference type="SUPFAM" id="SSF57184">
    <property type="entry name" value="Growth factor receptor domain"/>
    <property type="match status" value="1"/>
</dbReference>
<dbReference type="SUPFAM" id="SSF56112">
    <property type="entry name" value="Protein kinase-like (PK-like)"/>
    <property type="match status" value="1"/>
</dbReference>
<dbReference type="SUPFAM" id="SSF47769">
    <property type="entry name" value="SAM/Pointed domain"/>
    <property type="match status" value="1"/>
</dbReference>
<dbReference type="PROSITE" id="PS51550">
    <property type="entry name" value="EPH_LBD"/>
    <property type="match status" value="1"/>
</dbReference>
<dbReference type="PROSITE" id="PS50853">
    <property type="entry name" value="FN3"/>
    <property type="match status" value="2"/>
</dbReference>
<dbReference type="PROSITE" id="PS00107">
    <property type="entry name" value="PROTEIN_KINASE_ATP"/>
    <property type="match status" value="1"/>
</dbReference>
<dbReference type="PROSITE" id="PS50011">
    <property type="entry name" value="PROTEIN_KINASE_DOM"/>
    <property type="match status" value="1"/>
</dbReference>
<dbReference type="PROSITE" id="PS00109">
    <property type="entry name" value="PROTEIN_KINASE_TYR"/>
    <property type="match status" value="1"/>
</dbReference>
<dbReference type="PROSITE" id="PS00790">
    <property type="entry name" value="RECEPTOR_TYR_KIN_V_1"/>
    <property type="match status" value="1"/>
</dbReference>
<dbReference type="PROSITE" id="PS00791">
    <property type="entry name" value="RECEPTOR_TYR_KIN_V_2"/>
    <property type="match status" value="1"/>
</dbReference>
<dbReference type="PROSITE" id="PS50105">
    <property type="entry name" value="SAM_DOMAIN"/>
    <property type="match status" value="1"/>
</dbReference>
<gene>
    <name evidence="29" type="primary">Ephb2</name>
    <name type="synonym">Epth3</name>
    <name evidence="27" type="synonym">Nuk</name>
    <name evidence="29" type="synonym">Sek3</name>
</gene>
<protein>
    <recommendedName>
        <fullName evidence="28">Ephrin type-B receptor 2</fullName>
        <ecNumber>2.7.10.1</ecNumber>
    </recommendedName>
    <alternativeName>
        <fullName>Neural kinase</fullName>
    </alternativeName>
    <alternativeName>
        <fullName>Nuk receptor tyrosine kinase</fullName>
    </alternativeName>
    <alternativeName>
        <fullName>Tyrosine-protein kinase receptor EPH-3</fullName>
    </alternativeName>
    <alternativeName>
        <fullName>Tyrosine-protein kinase receptor SEK-3</fullName>
    </alternativeName>
    <component>
        <recommendedName>
            <fullName evidence="25">EphB2/CTF1</fullName>
        </recommendedName>
    </component>
    <component>
        <recommendedName>
            <fullName evidence="25">EphB2/CTF2</fullName>
        </recommendedName>
    </component>
</protein>
<organism>
    <name type="scientific">Mus musculus</name>
    <name type="common">Mouse</name>
    <dbReference type="NCBI Taxonomy" id="10090"/>
    <lineage>
        <taxon>Eukaryota</taxon>
        <taxon>Metazoa</taxon>
        <taxon>Chordata</taxon>
        <taxon>Craniata</taxon>
        <taxon>Vertebrata</taxon>
        <taxon>Euteleostomi</taxon>
        <taxon>Mammalia</taxon>
        <taxon>Eutheria</taxon>
        <taxon>Euarchontoglires</taxon>
        <taxon>Glires</taxon>
        <taxon>Rodentia</taxon>
        <taxon>Myomorpha</taxon>
        <taxon>Muroidea</taxon>
        <taxon>Muridae</taxon>
        <taxon>Murinae</taxon>
        <taxon>Mus</taxon>
        <taxon>Mus</taxon>
    </lineage>
</organism>
<sequence length="986" mass="109899">MAVRRLGAALLLLPLLAAVEETLMDSTTATAELGWMVHPPSGWEEVSGYDENMNTIRTYQVCNVFESSQNNWLRTKFIRRRGAHRIHVEMKFSVRDCSSIPSVPGSCKETFNLYYYEADFDLATKTFPNWMENPWVKVDTIAADESFSQVDLGGRVMKINTEVRSFGPVSRNGFYLAFQDYGGCMSLIAVRVFYRKCPRIIQNGAIFQETLSGAESTSLVAARGSCIANAEEVDVPIKLYCNGDGEWLVPIGRCMCKAGFEAVENGTVCRGCPSGTFKANQGDEACTHCPINSRTTSEGATNCVCRNGYYRADLDPLDMPCTTIPSAPQAVISSVNETSLMLEWTPPRDSGGREDLVYNIICKSCGSGRGACTRCGDNVQYAPRQLGLTEPRIYISDLLAHTQYTFEIQAVNGVTDQSPFSPQFASVNITTNQAAPSAVSIMHQVSRTVDSITLSWSQPDQPNGVILDYELQYYEKELSEYNATAIKSPTNTVTVQGLKAGAIYVFQVRARTVAGYGRYSGKMYFQTMTEAEYQTSIKEKLPLIVGSSAAGLVFLIAVVVIAIVCNRRGFERADSEYTDKLQHYTSGHMTPGMKIYIDPFTYEDPNEAVREFAKEIDISCVKIEQVIGAGEFGEVCSGHLKLPGKREIFVAIKTLKSGYTEKQRRDFLSEASIMGQFDHPNVIHLEGVVTKSTPVMIITEFMENGSLDSFLRQNDGQFTVIQLVGMLRGIAAGMKYLADMNYVHRDLAARNILVNSNLVCKVSDFGLSRFLEDDTSDPTYTSALGGKIPIRWTAPEAIQYRKFTSASDVWSYGIVMWEVMSYGERPYWDMTNQDVINAIEQDYRLPPPMDCPSALHQLMLDCWQKDRNHRPKFGQIVNTLDKMIRNPNSLKAMAPLSSGINLPLLDRTIPDYTSFNTVDEWLEAIKMGQYKESFANAGFTSFDVVSQMMMEDILRVGVTLAGHQKKILNSIQVMRAQMNQIQSVEV</sequence>
<feature type="signal peptide" evidence="2">
    <location>
        <begin position="1"/>
        <end position="18"/>
    </location>
</feature>
<feature type="chain" id="PRO_0000016828" description="Ephrin type-B receptor 2" evidence="2">
    <location>
        <begin position="19"/>
        <end position="986"/>
    </location>
</feature>
<feature type="chain" id="PRO_0000445963" description="EphB2/CTF1" evidence="15">
    <location>
        <begin position="536"/>
        <end position="986"/>
    </location>
</feature>
<feature type="chain" id="PRO_0000445964" description="EphB2/CTF2" evidence="15">
    <location>
        <begin position="562"/>
        <end position="986"/>
    </location>
</feature>
<feature type="topological domain" description="Extracellular" evidence="2">
    <location>
        <begin position="19"/>
        <end position="543"/>
    </location>
</feature>
<feature type="transmembrane region" description="Helical" evidence="2">
    <location>
        <begin position="544"/>
        <end position="564"/>
    </location>
</feature>
<feature type="topological domain" description="Cytoplasmic" evidence="2">
    <location>
        <begin position="565"/>
        <end position="986"/>
    </location>
</feature>
<feature type="domain" description="Eph LBD" evidence="6">
    <location>
        <begin position="20"/>
        <end position="202"/>
    </location>
</feature>
<feature type="domain" description="Fibronectin type-III 1" evidence="5">
    <location>
        <begin position="324"/>
        <end position="434"/>
    </location>
</feature>
<feature type="domain" description="Fibronectin type-III 2" evidence="5">
    <location>
        <begin position="435"/>
        <end position="530"/>
    </location>
</feature>
<feature type="domain" description="Protein kinase" evidence="3">
    <location>
        <begin position="621"/>
        <end position="884"/>
    </location>
</feature>
<feature type="domain" description="SAM" evidence="4">
    <location>
        <begin position="913"/>
        <end position="977"/>
    </location>
</feature>
<feature type="short sequence motif" description="PDZ-binding">
    <location>
        <begin position="984"/>
        <end position="986"/>
    </location>
</feature>
<feature type="active site" description="Proton acceptor" evidence="3">
    <location>
        <position position="746"/>
    </location>
</feature>
<feature type="binding site" evidence="3">
    <location>
        <begin position="627"/>
        <end position="635"/>
    </location>
    <ligand>
        <name>ATP</name>
        <dbReference type="ChEBI" id="CHEBI:30616"/>
    </ligand>
</feature>
<feature type="binding site" evidence="3">
    <location>
        <position position="653"/>
    </location>
    <ligand>
        <name>ATP</name>
        <dbReference type="ChEBI" id="CHEBI:30616"/>
    </ligand>
</feature>
<feature type="site" description="Cleavage; by a metalloproteinase" evidence="15">
    <location>
        <begin position="535"/>
        <end position="536"/>
    </location>
</feature>
<feature type="site" description="Cleavage; by gamma-secretase/PS1" evidence="15">
    <location>
        <begin position="561"/>
        <end position="562"/>
    </location>
</feature>
<feature type="glycosylation site" description="N-linked (GlcNAc...) asparagine" evidence="16">
    <location>
        <position position="265"/>
    </location>
</feature>
<feature type="glycosylation site" description="N-linked (GlcNAc...) asparagine" evidence="2">
    <location>
        <position position="336"/>
    </location>
</feature>
<feature type="glycosylation site" description="N-linked (GlcNAc...) asparagine" evidence="2">
    <location>
        <position position="428"/>
    </location>
</feature>
<feature type="glycosylation site" description="N-linked (GlcNAc...) asparagine" evidence="17">
    <location>
        <position position="482"/>
    </location>
</feature>
<feature type="disulfide bond" evidence="11">
    <location>
        <begin position="62"/>
        <end position="184"/>
    </location>
</feature>
<feature type="disulfide bond" evidence="11">
    <location>
        <begin position="97"/>
        <end position="107"/>
    </location>
</feature>
<feature type="cross-link" description="Glycyl lysine isopeptide (Lys-Gly) (interchain with G-Cter in ubiquitin)" evidence="1">
    <location>
        <position position="891"/>
    </location>
</feature>
<feature type="splice variant" id="VSP_057932" description="In isoform 4." evidence="28">
    <original>K</original>
    <variation>KQ</variation>
    <location>
        <position position="476"/>
    </location>
</feature>
<feature type="splice variant" id="VSP_057933" description="In isoform 2." evidence="26">
    <original>N</original>
    <variation>NR</variation>
    <location>
        <position position="566"/>
    </location>
</feature>
<feature type="mutagenesis site" description="No loss of interaction with SPSB4; when associated with F-602." evidence="20">
    <original>Y</original>
    <variation>F</variation>
    <location>
        <position position="596"/>
    </location>
</feature>
<feature type="mutagenesis site" description="No loss of interaction with SPSB4; when associated with F-596." evidence="20">
    <original>Y</original>
    <variation>F</variation>
    <location>
        <position position="602"/>
    </location>
</feature>
<feature type="strand" evidence="33">
    <location>
        <begin position="20"/>
        <end position="25"/>
    </location>
</feature>
<feature type="helix" evidence="33">
    <location>
        <begin position="26"/>
        <end position="28"/>
    </location>
</feature>
<feature type="strand" evidence="33">
    <location>
        <begin position="36"/>
        <end position="39"/>
    </location>
</feature>
<feature type="strand" evidence="33">
    <location>
        <begin position="44"/>
        <end position="49"/>
    </location>
</feature>
<feature type="strand" evidence="33">
    <location>
        <begin position="55"/>
        <end position="61"/>
    </location>
</feature>
<feature type="strand" evidence="33">
    <location>
        <begin position="66"/>
        <end position="68"/>
    </location>
</feature>
<feature type="strand" evidence="33">
    <location>
        <begin position="71"/>
        <end position="74"/>
    </location>
</feature>
<feature type="strand" evidence="33">
    <location>
        <begin position="84"/>
        <end position="94"/>
    </location>
</feature>
<feature type="helix" evidence="33">
    <location>
        <begin position="97"/>
        <end position="99"/>
    </location>
</feature>
<feature type="strand" evidence="31">
    <location>
        <begin position="100"/>
        <end position="102"/>
    </location>
</feature>
<feature type="strand" evidence="33">
    <location>
        <begin position="110"/>
        <end position="121"/>
    </location>
</feature>
<feature type="strand" evidence="33">
    <location>
        <begin position="125"/>
        <end position="128"/>
    </location>
</feature>
<feature type="strand" evidence="33">
    <location>
        <begin position="130"/>
        <end position="132"/>
    </location>
</feature>
<feature type="strand" evidence="33">
    <location>
        <begin position="135"/>
        <end position="142"/>
    </location>
</feature>
<feature type="strand" evidence="33">
    <location>
        <begin position="147"/>
        <end position="152"/>
    </location>
</feature>
<feature type="strand" evidence="33">
    <location>
        <begin position="155"/>
        <end position="166"/>
    </location>
</feature>
<feature type="strand" evidence="33">
    <location>
        <begin position="171"/>
        <end position="182"/>
    </location>
</feature>
<feature type="strand" evidence="33">
    <location>
        <begin position="185"/>
        <end position="195"/>
    </location>
</feature>
<feature type="strand" evidence="34">
    <location>
        <begin position="200"/>
        <end position="202"/>
    </location>
</feature>
<feature type="strand" evidence="34">
    <location>
        <begin position="205"/>
        <end position="207"/>
    </location>
</feature>
<feature type="strand" evidence="34">
    <location>
        <begin position="220"/>
        <end position="223"/>
    </location>
</feature>
<feature type="strand" evidence="34">
    <location>
        <begin position="228"/>
        <end position="241"/>
    </location>
</feature>
<feature type="strand" evidence="34">
    <location>
        <begin position="251"/>
        <end position="256"/>
    </location>
</feature>
<feature type="strand" evidence="34">
    <location>
        <begin position="260"/>
        <end position="263"/>
    </location>
</feature>
<feature type="turn" evidence="34">
    <location>
        <begin position="264"/>
        <end position="267"/>
    </location>
</feature>
<feature type="strand" evidence="34">
    <location>
        <begin position="268"/>
        <end position="271"/>
    </location>
</feature>
<feature type="strand" evidence="34">
    <location>
        <begin position="296"/>
        <end position="302"/>
    </location>
</feature>
<feature type="strand" evidence="34">
    <location>
        <begin position="329"/>
        <end position="336"/>
    </location>
</feature>
<feature type="strand" evidence="34">
    <location>
        <begin position="339"/>
        <end position="345"/>
    </location>
</feature>
<feature type="strand" evidence="34">
    <location>
        <begin position="357"/>
        <end position="365"/>
    </location>
</feature>
<feature type="strand" evidence="34">
    <location>
        <begin position="367"/>
        <end position="369"/>
    </location>
</feature>
<feature type="strand" evidence="34">
    <location>
        <begin position="381"/>
        <end position="383"/>
    </location>
</feature>
<feature type="strand" evidence="34">
    <location>
        <begin position="385"/>
        <end position="395"/>
    </location>
</feature>
<feature type="strand" evidence="34">
    <location>
        <begin position="403"/>
        <end position="411"/>
    </location>
</feature>
<feature type="helix" evidence="34">
    <location>
        <begin position="415"/>
        <end position="417"/>
    </location>
</feature>
<feature type="strand" evidence="34">
    <location>
        <begin position="424"/>
        <end position="430"/>
    </location>
</feature>
<feature type="strand" evidence="34">
    <location>
        <begin position="442"/>
        <end position="447"/>
    </location>
</feature>
<feature type="strand" evidence="34">
    <location>
        <begin position="452"/>
        <end position="456"/>
    </location>
</feature>
<feature type="strand" evidence="34">
    <location>
        <begin position="466"/>
        <end position="478"/>
    </location>
</feature>
<feature type="helix" evidence="34">
    <location>
        <begin position="480"/>
        <end position="482"/>
    </location>
</feature>
<feature type="strand" evidence="34">
    <location>
        <begin position="484"/>
        <end position="495"/>
    </location>
</feature>
<feature type="strand" evidence="34">
    <location>
        <begin position="503"/>
        <end position="512"/>
    </location>
</feature>
<feature type="strand" evidence="34">
    <location>
        <begin position="523"/>
        <end position="526"/>
    </location>
</feature>
<feature type="helix" evidence="34">
    <location>
        <begin position="530"/>
        <end position="540"/>
    </location>
</feature>
<feature type="helix" evidence="30">
    <location>
        <begin position="599"/>
        <end position="601"/>
    </location>
</feature>
<feature type="strand" evidence="30">
    <location>
        <begin position="602"/>
        <end position="604"/>
    </location>
</feature>
<feature type="helix" evidence="30">
    <location>
        <begin position="605"/>
        <end position="612"/>
    </location>
</feature>
<feature type="helix" evidence="30">
    <location>
        <begin position="618"/>
        <end position="620"/>
    </location>
</feature>
<feature type="strand" evidence="30">
    <location>
        <begin position="621"/>
        <end position="629"/>
    </location>
</feature>
<feature type="strand" evidence="30">
    <location>
        <begin position="631"/>
        <end position="640"/>
    </location>
</feature>
<feature type="strand" evidence="32">
    <location>
        <begin position="643"/>
        <end position="645"/>
    </location>
</feature>
<feature type="strand" evidence="30">
    <location>
        <begin position="648"/>
        <end position="654"/>
    </location>
</feature>
<feature type="helix" evidence="30">
    <location>
        <begin position="661"/>
        <end position="674"/>
    </location>
</feature>
<feature type="strand" evidence="30">
    <location>
        <begin position="685"/>
        <end position="689"/>
    </location>
</feature>
<feature type="strand" evidence="30">
    <location>
        <begin position="691"/>
        <end position="694"/>
    </location>
</feature>
<feature type="strand" evidence="30">
    <location>
        <begin position="696"/>
        <end position="700"/>
    </location>
</feature>
<feature type="helix" evidence="30">
    <location>
        <begin position="707"/>
        <end position="712"/>
    </location>
</feature>
<feature type="turn" evidence="30">
    <location>
        <begin position="713"/>
        <end position="716"/>
    </location>
</feature>
<feature type="helix" evidence="30">
    <location>
        <begin position="720"/>
        <end position="739"/>
    </location>
</feature>
<feature type="helix" evidence="30">
    <location>
        <begin position="749"/>
        <end position="751"/>
    </location>
</feature>
<feature type="strand" evidence="30">
    <location>
        <begin position="752"/>
        <end position="754"/>
    </location>
</feature>
<feature type="strand" evidence="30">
    <location>
        <begin position="760"/>
        <end position="762"/>
    </location>
</feature>
<feature type="helix" evidence="30">
    <location>
        <begin position="790"/>
        <end position="792"/>
    </location>
</feature>
<feature type="helix" evidence="30">
    <location>
        <begin position="795"/>
        <end position="799"/>
    </location>
</feature>
<feature type="helix" evidence="30">
    <location>
        <begin position="805"/>
        <end position="820"/>
    </location>
</feature>
<feature type="turn" evidence="32">
    <location>
        <begin position="821"/>
        <end position="823"/>
    </location>
</feature>
<feature type="turn" evidence="30">
    <location>
        <begin position="826"/>
        <end position="829"/>
    </location>
</feature>
<feature type="helix" evidence="30">
    <location>
        <begin position="832"/>
        <end position="840"/>
    </location>
</feature>
<feature type="helix" evidence="30">
    <location>
        <begin position="853"/>
        <end position="862"/>
    </location>
</feature>
<feature type="turn" evidence="30">
    <location>
        <begin position="867"/>
        <end position="869"/>
    </location>
</feature>
<feature type="helix" evidence="30">
    <location>
        <begin position="873"/>
        <end position="885"/>
    </location>
</feature>
<feature type="helix" evidence="30">
    <location>
        <begin position="887"/>
        <end position="890"/>
    </location>
</feature>